<accession>A7TQ73</accession>
<feature type="chain" id="PRO_0000330250" description="tRNA-dihydrouridine(47) synthase [NAD(P)(+)]">
    <location>
        <begin position="1"/>
        <end position="664"/>
    </location>
</feature>
<feature type="zinc finger region" description="C3H1-type 1" evidence="4">
    <location>
        <begin position="88"/>
        <end position="122"/>
    </location>
</feature>
<feature type="zinc finger region" description="C3H1-type 2" evidence="4">
    <location>
        <begin position="134"/>
        <end position="164"/>
    </location>
</feature>
<feature type="region of interest" description="Disordered" evidence="5">
    <location>
        <begin position="1"/>
        <end position="22"/>
    </location>
</feature>
<feature type="region of interest" description="Disordered" evidence="5">
    <location>
        <begin position="47"/>
        <end position="87"/>
    </location>
</feature>
<feature type="region of interest" description="Disordered" evidence="5">
    <location>
        <begin position="230"/>
        <end position="261"/>
    </location>
</feature>
<feature type="compositionally biased region" description="Basic residues" evidence="5">
    <location>
        <begin position="67"/>
        <end position="79"/>
    </location>
</feature>
<feature type="compositionally biased region" description="Basic and acidic residues" evidence="5">
    <location>
        <begin position="230"/>
        <end position="245"/>
    </location>
</feature>
<feature type="active site" description="Proton donor" evidence="2">
    <location>
        <position position="384"/>
    </location>
</feature>
<feature type="binding site" evidence="2">
    <location>
        <begin position="297"/>
        <end position="299"/>
    </location>
    <ligand>
        <name>FMN</name>
        <dbReference type="ChEBI" id="CHEBI:58210"/>
    </ligand>
</feature>
<feature type="binding site" evidence="2">
    <location>
        <position position="352"/>
    </location>
    <ligand>
        <name>FMN</name>
        <dbReference type="ChEBI" id="CHEBI:58210"/>
    </ligand>
</feature>
<feature type="binding site" evidence="2">
    <location>
        <position position="424"/>
    </location>
    <ligand>
        <name>FMN</name>
        <dbReference type="ChEBI" id="CHEBI:58210"/>
    </ligand>
</feature>
<feature type="binding site" evidence="2">
    <location>
        <position position="455"/>
    </location>
    <ligand>
        <name>FMN</name>
        <dbReference type="ChEBI" id="CHEBI:58210"/>
    </ligand>
</feature>
<feature type="binding site" evidence="2">
    <location>
        <begin position="507"/>
        <end position="509"/>
    </location>
    <ligand>
        <name>FMN</name>
        <dbReference type="ChEBI" id="CHEBI:58210"/>
    </ligand>
</feature>
<feature type="binding site" evidence="2">
    <location>
        <begin position="532"/>
        <end position="533"/>
    </location>
    <ligand>
        <name>FMN</name>
        <dbReference type="ChEBI" id="CHEBI:58210"/>
    </ligand>
</feature>
<proteinExistence type="inferred from homology"/>
<protein>
    <recommendedName>
        <fullName>tRNA-dihydrouridine(47) synthase [NAD(P)(+)]</fullName>
        <ecNumber evidence="1">1.3.1.89</ecNumber>
    </recommendedName>
    <alternativeName>
        <fullName>mRNA-dihydrouridine synthase DUS3</fullName>
        <ecNumber evidence="3">1.3.1.-</ecNumber>
    </alternativeName>
    <alternativeName>
        <fullName>tRNA-dihydrouridine synthase 3</fullName>
    </alternativeName>
</protein>
<reference key="1">
    <citation type="journal article" date="2007" name="Proc. Natl. Acad. Sci. U.S.A.">
        <title>Independent sorting-out of thousands of duplicated gene pairs in two yeast species descended from a whole-genome duplication.</title>
        <authorList>
            <person name="Scannell D.R."/>
            <person name="Frank A.C."/>
            <person name="Conant G.C."/>
            <person name="Byrne K.P."/>
            <person name="Woolfit M."/>
            <person name="Wolfe K.H."/>
        </authorList>
    </citation>
    <scope>NUCLEOTIDE SEQUENCE [LARGE SCALE GENOMIC DNA]</scope>
    <source>
        <strain>ATCC 22028 / DSM 70294 / BCRC 21397 / CBS 2163 / NBRC 10782 / NRRL Y-8283 / UCD 57-17</strain>
    </source>
</reference>
<evidence type="ECO:0000250" key="1">
    <source>
        <dbReference type="UniProtKB" id="Q06053"/>
    </source>
</evidence>
<evidence type="ECO:0000250" key="2">
    <source>
        <dbReference type="UniProtKB" id="Q5SMC7"/>
    </source>
</evidence>
<evidence type="ECO:0000250" key="3">
    <source>
        <dbReference type="UniProtKB" id="Q9UTH9"/>
    </source>
</evidence>
<evidence type="ECO:0000255" key="4">
    <source>
        <dbReference type="PROSITE-ProRule" id="PRU00723"/>
    </source>
</evidence>
<evidence type="ECO:0000256" key="5">
    <source>
        <dbReference type="SAM" id="MobiDB-lite"/>
    </source>
</evidence>
<evidence type="ECO:0000305" key="6"/>
<keyword id="KW-0963">Cytoplasm</keyword>
<keyword id="KW-0285">Flavoprotein</keyword>
<keyword id="KW-0288">FMN</keyword>
<keyword id="KW-0479">Metal-binding</keyword>
<keyword id="KW-0507">mRNA processing</keyword>
<keyword id="KW-0520">NAD</keyword>
<keyword id="KW-0521">NADP</keyword>
<keyword id="KW-0539">Nucleus</keyword>
<keyword id="KW-0560">Oxidoreductase</keyword>
<keyword id="KW-1185">Reference proteome</keyword>
<keyword id="KW-0677">Repeat</keyword>
<keyword id="KW-0819">tRNA processing</keyword>
<keyword id="KW-0862">Zinc</keyword>
<keyword id="KW-0863">Zinc-finger</keyword>
<gene>
    <name type="primary">DUS3</name>
    <name type="ORF">Kpol_483p21</name>
</gene>
<sequence>MSAEKRELEDSGSNGELKRQDVSFSKGIAHIKAEFIAKSNDNSQFQQAYNDEEIADADRIGAEGGKNSRKHKKKQRGQNKSRDNRQVKEEKVLCPKYIQGYSEDGESLCQFGDKCRFVHDIKEYLSHKKPEIELDQFKICPVFDALGFCPMGFKCRFMSSHFDKENFKLVKRGTDEERQKLWSLDHEVNRITSEEKLSLIKRRFPFTKSNEVLDIIDSIQQEFRDITAPKVSKEEASEDKPKDSNEAEVAPQVLQREEELKKKREHQRELYLKYKDTRYFAQEKKDLDLRRKKIVSPLTTVGNLPYRRLMRKLGADVTYSEMALAVPLIQGTNSEWALPKAHSTEIPGFGVQIACSKAWQAAKAAEALAKFTPDINEINLNSGCPIDLLYRQGSGSALLDNPARMIRCLNAMNYVSDSIPITVKIRTGTRDSHPVADTLVKRLVYETDVAAITLHGRSRQQRYTRVADWDYVSTVAKSLRESEASFLESAEGKESRESKRRIQFVGNGDVNNFEDWHRILNNDENIDSIMVARGALIKPWVFEEVDAQQHLDKSSTERLEILRDYAQFSMEHWGTDEYGIAQCRRFFCEFMSFFHRYIPIGICERYPVQLNERPPNWVGRDDLETLMGSTDARDWIKLSEMFFGKVEESFVFTPKHKSSSFPSA</sequence>
<organism>
    <name type="scientific">Vanderwaltozyma polyspora (strain ATCC 22028 / DSM 70294 / BCRC 21397 / CBS 2163 / NBRC 10782 / NRRL Y-8283 / UCD 57-17)</name>
    <name type="common">Kluyveromyces polysporus</name>
    <dbReference type="NCBI Taxonomy" id="436907"/>
    <lineage>
        <taxon>Eukaryota</taxon>
        <taxon>Fungi</taxon>
        <taxon>Dikarya</taxon>
        <taxon>Ascomycota</taxon>
        <taxon>Saccharomycotina</taxon>
        <taxon>Saccharomycetes</taxon>
        <taxon>Saccharomycetales</taxon>
        <taxon>Saccharomycetaceae</taxon>
        <taxon>Vanderwaltozyma</taxon>
    </lineage>
</organism>
<dbReference type="EC" id="1.3.1.89" evidence="1"/>
<dbReference type="EC" id="1.3.1.-" evidence="3"/>
<dbReference type="EMBL" id="DS480453">
    <property type="protein sequence ID" value="EDO15602.1"/>
    <property type="molecule type" value="Genomic_DNA"/>
</dbReference>
<dbReference type="RefSeq" id="XP_001643460.1">
    <property type="nucleotide sequence ID" value="XM_001643410.1"/>
</dbReference>
<dbReference type="SMR" id="A7TQ73"/>
<dbReference type="FunCoup" id="A7TQ73">
    <property type="interactions" value="935"/>
</dbReference>
<dbReference type="STRING" id="436907.A7TQ73"/>
<dbReference type="GeneID" id="5543691"/>
<dbReference type="KEGG" id="vpo:Kpol_483p21"/>
<dbReference type="eggNOG" id="KOG2333">
    <property type="taxonomic scope" value="Eukaryota"/>
</dbReference>
<dbReference type="HOGENOM" id="CLU_013299_7_0_1"/>
<dbReference type="InParanoid" id="A7TQ73"/>
<dbReference type="OMA" id="WSYIAEC"/>
<dbReference type="OrthoDB" id="259935at2759"/>
<dbReference type="PhylomeDB" id="A7TQ73"/>
<dbReference type="Proteomes" id="UP000000267">
    <property type="component" value="Unassembled WGS sequence"/>
</dbReference>
<dbReference type="GO" id="GO:0005737">
    <property type="term" value="C:cytoplasm"/>
    <property type="evidence" value="ECO:0007669"/>
    <property type="project" value="UniProtKB-SubCell"/>
</dbReference>
<dbReference type="GO" id="GO:0034399">
    <property type="term" value="C:nuclear periphery"/>
    <property type="evidence" value="ECO:0007669"/>
    <property type="project" value="EnsemblFungi"/>
</dbReference>
<dbReference type="GO" id="GO:0050660">
    <property type="term" value="F:flavin adenine dinucleotide binding"/>
    <property type="evidence" value="ECO:0007669"/>
    <property type="project" value="InterPro"/>
</dbReference>
<dbReference type="GO" id="GO:0106414">
    <property type="term" value="F:mRNA dihydrouridine synthase activity"/>
    <property type="evidence" value="ECO:0007669"/>
    <property type="project" value="RHEA"/>
</dbReference>
<dbReference type="GO" id="GO:0003723">
    <property type="term" value="F:RNA binding"/>
    <property type="evidence" value="ECO:0007669"/>
    <property type="project" value="TreeGrafter"/>
</dbReference>
<dbReference type="GO" id="GO:0102265">
    <property type="term" value="F:tRNA-dihydrouridine47 synthase activity"/>
    <property type="evidence" value="ECO:0007669"/>
    <property type="project" value="UniProtKB-EC"/>
</dbReference>
<dbReference type="GO" id="GO:0008270">
    <property type="term" value="F:zinc ion binding"/>
    <property type="evidence" value="ECO:0007669"/>
    <property type="project" value="UniProtKB-KW"/>
</dbReference>
<dbReference type="GO" id="GO:0006397">
    <property type="term" value="P:mRNA processing"/>
    <property type="evidence" value="ECO:0007669"/>
    <property type="project" value="UniProtKB-KW"/>
</dbReference>
<dbReference type="CDD" id="cd02801">
    <property type="entry name" value="DUS_like_FMN"/>
    <property type="match status" value="1"/>
</dbReference>
<dbReference type="FunFam" id="3.20.20.70:FF:000145">
    <property type="entry name" value="tRNA-dihydrouridine(47) synthase [NAD(P)(+)]"/>
    <property type="match status" value="1"/>
</dbReference>
<dbReference type="FunFam" id="4.10.1000.10:FF:000029">
    <property type="entry name" value="tRNA-dihydrouridine(47) synthase [NAD(P)(+)]"/>
    <property type="match status" value="1"/>
</dbReference>
<dbReference type="Gene3D" id="3.20.20.70">
    <property type="entry name" value="Aldolase class I"/>
    <property type="match status" value="1"/>
</dbReference>
<dbReference type="Gene3D" id="4.10.1000.10">
    <property type="entry name" value="Zinc finger, CCCH-type"/>
    <property type="match status" value="1"/>
</dbReference>
<dbReference type="InterPro" id="IPR013785">
    <property type="entry name" value="Aldolase_TIM"/>
</dbReference>
<dbReference type="InterPro" id="IPR035587">
    <property type="entry name" value="DUS-like_FMN-bd"/>
</dbReference>
<dbReference type="InterPro" id="IPR018517">
    <property type="entry name" value="tRNA_hU_synthase_CS"/>
</dbReference>
<dbReference type="InterPro" id="IPR000571">
    <property type="entry name" value="Znf_CCCH"/>
</dbReference>
<dbReference type="PANTHER" id="PTHR45846">
    <property type="entry name" value="TRNA-DIHYDROURIDINE(47) SYNTHASE [NAD(P)(+)]-LIKE"/>
    <property type="match status" value="1"/>
</dbReference>
<dbReference type="PANTHER" id="PTHR45846:SF1">
    <property type="entry name" value="TRNA-DIHYDROURIDINE(47) SYNTHASE [NAD(P)(+)]-LIKE"/>
    <property type="match status" value="1"/>
</dbReference>
<dbReference type="Pfam" id="PF01207">
    <property type="entry name" value="Dus"/>
    <property type="match status" value="2"/>
</dbReference>
<dbReference type="SUPFAM" id="SSF51395">
    <property type="entry name" value="FMN-linked oxidoreductases"/>
    <property type="match status" value="1"/>
</dbReference>
<dbReference type="PROSITE" id="PS01136">
    <property type="entry name" value="UPF0034"/>
    <property type="match status" value="1"/>
</dbReference>
<dbReference type="PROSITE" id="PS50103">
    <property type="entry name" value="ZF_C3H1"/>
    <property type="match status" value="2"/>
</dbReference>
<comment type="function">
    <text evidence="1 3">Catalyzes the synthesis of dihydrouridine, a modified base found in the D-loop of most tRNAs. Specifically modifies U47 in cytoplasmic tRNAs (By similarity). Catalyzes the synthesis of dihydrouridine in some mRNAs, thereby affecting their translation (By similarity).</text>
</comment>
<comment type="catalytic activity">
    <reaction evidence="1">
        <text>5,6-dihydrouridine(47) in tRNA + NAD(+) = uridine(47) in tRNA + NADH + H(+)</text>
        <dbReference type="Rhea" id="RHEA:53364"/>
        <dbReference type="Rhea" id="RHEA-COMP:13539"/>
        <dbReference type="Rhea" id="RHEA-COMP:13540"/>
        <dbReference type="ChEBI" id="CHEBI:15378"/>
        <dbReference type="ChEBI" id="CHEBI:57540"/>
        <dbReference type="ChEBI" id="CHEBI:57945"/>
        <dbReference type="ChEBI" id="CHEBI:65315"/>
        <dbReference type="ChEBI" id="CHEBI:74443"/>
        <dbReference type="EC" id="1.3.1.89"/>
    </reaction>
    <physiologicalReaction direction="right-to-left" evidence="1">
        <dbReference type="Rhea" id="RHEA:53366"/>
    </physiologicalReaction>
</comment>
<comment type="catalytic activity">
    <reaction evidence="1">
        <text>5,6-dihydrouridine(47) in tRNA + NADP(+) = uridine(47) in tRNA + NADPH + H(+)</text>
        <dbReference type="Rhea" id="RHEA:53360"/>
        <dbReference type="Rhea" id="RHEA-COMP:13539"/>
        <dbReference type="Rhea" id="RHEA-COMP:13540"/>
        <dbReference type="ChEBI" id="CHEBI:15378"/>
        <dbReference type="ChEBI" id="CHEBI:57783"/>
        <dbReference type="ChEBI" id="CHEBI:58349"/>
        <dbReference type="ChEBI" id="CHEBI:65315"/>
        <dbReference type="ChEBI" id="CHEBI:74443"/>
        <dbReference type="EC" id="1.3.1.89"/>
    </reaction>
    <physiologicalReaction direction="right-to-left" evidence="1">
        <dbReference type="Rhea" id="RHEA:53362"/>
    </physiologicalReaction>
</comment>
<comment type="catalytic activity">
    <reaction evidence="3">
        <text>a 5,6-dihydrouridine in mRNA + NAD(+) = a uridine in mRNA + NADH + H(+)</text>
        <dbReference type="Rhea" id="RHEA:69851"/>
        <dbReference type="Rhea" id="RHEA-COMP:14658"/>
        <dbReference type="Rhea" id="RHEA-COMP:17789"/>
        <dbReference type="ChEBI" id="CHEBI:15378"/>
        <dbReference type="ChEBI" id="CHEBI:57540"/>
        <dbReference type="ChEBI" id="CHEBI:57945"/>
        <dbReference type="ChEBI" id="CHEBI:65315"/>
        <dbReference type="ChEBI" id="CHEBI:74443"/>
    </reaction>
    <physiologicalReaction direction="right-to-left" evidence="3">
        <dbReference type="Rhea" id="RHEA:69853"/>
    </physiologicalReaction>
</comment>
<comment type="catalytic activity">
    <reaction evidence="3">
        <text>a 5,6-dihydrouridine in mRNA + NADP(+) = a uridine in mRNA + NADPH + H(+)</text>
        <dbReference type="Rhea" id="RHEA:69855"/>
        <dbReference type="Rhea" id="RHEA-COMP:14658"/>
        <dbReference type="Rhea" id="RHEA-COMP:17789"/>
        <dbReference type="ChEBI" id="CHEBI:15378"/>
        <dbReference type="ChEBI" id="CHEBI:57783"/>
        <dbReference type="ChEBI" id="CHEBI:58349"/>
        <dbReference type="ChEBI" id="CHEBI:65315"/>
        <dbReference type="ChEBI" id="CHEBI:74443"/>
    </reaction>
    <physiologicalReaction direction="right-to-left" evidence="3">
        <dbReference type="Rhea" id="RHEA:69857"/>
    </physiologicalReaction>
</comment>
<comment type="cofactor">
    <cofactor evidence="2">
        <name>FMN</name>
        <dbReference type="ChEBI" id="CHEBI:58210"/>
    </cofactor>
</comment>
<comment type="subcellular location">
    <subcellularLocation>
        <location evidence="1">Cytoplasm</location>
    </subcellularLocation>
    <subcellularLocation>
        <location evidence="1">Nucleus</location>
    </subcellularLocation>
</comment>
<comment type="similarity">
    <text evidence="6">Belongs to the Dus family. Dus3 subfamily.</text>
</comment>
<name>DUS3_VANPO</name>